<proteinExistence type="inferred from homology"/>
<evidence type="ECO:0000255" key="1">
    <source>
        <dbReference type="HAMAP-Rule" id="MF_00002"/>
    </source>
</evidence>
<dbReference type="EMBL" id="CP000243">
    <property type="protein sequence ID" value="ABE10254.1"/>
    <property type="molecule type" value="Genomic_DNA"/>
</dbReference>
<dbReference type="RefSeq" id="WP_000148581.1">
    <property type="nucleotide sequence ID" value="NZ_CP064825.1"/>
</dbReference>
<dbReference type="SMR" id="Q1R310"/>
<dbReference type="GeneID" id="93777580"/>
<dbReference type="KEGG" id="eci:UTI89_C4850"/>
<dbReference type="HOGENOM" id="CLU_128576_0_0_6"/>
<dbReference type="Proteomes" id="UP000001952">
    <property type="component" value="Chromosome"/>
</dbReference>
<dbReference type="GO" id="GO:0009347">
    <property type="term" value="C:aspartate carbamoyltransferase complex"/>
    <property type="evidence" value="ECO:0007669"/>
    <property type="project" value="InterPro"/>
</dbReference>
<dbReference type="GO" id="GO:0046872">
    <property type="term" value="F:metal ion binding"/>
    <property type="evidence" value="ECO:0007669"/>
    <property type="project" value="UniProtKB-KW"/>
</dbReference>
<dbReference type="GO" id="GO:0006207">
    <property type="term" value="P:'de novo' pyrimidine nucleobase biosynthetic process"/>
    <property type="evidence" value="ECO:0007669"/>
    <property type="project" value="InterPro"/>
</dbReference>
<dbReference type="GO" id="GO:0006221">
    <property type="term" value="P:pyrimidine nucleotide biosynthetic process"/>
    <property type="evidence" value="ECO:0007669"/>
    <property type="project" value="UniProtKB-UniRule"/>
</dbReference>
<dbReference type="FunFam" id="2.30.30.20:FF:000001">
    <property type="entry name" value="Aspartate carbamoyltransferase regulatory chain"/>
    <property type="match status" value="1"/>
</dbReference>
<dbReference type="FunFam" id="3.30.70.140:FF:000001">
    <property type="entry name" value="Aspartate carbamoyltransferase regulatory chain"/>
    <property type="match status" value="1"/>
</dbReference>
<dbReference type="Gene3D" id="2.30.30.20">
    <property type="entry name" value="Aspartate carbamoyltransferase regulatory subunit, C-terminal domain"/>
    <property type="match status" value="1"/>
</dbReference>
<dbReference type="Gene3D" id="3.30.70.140">
    <property type="entry name" value="Aspartate carbamoyltransferase regulatory subunit, N-terminal domain"/>
    <property type="match status" value="1"/>
</dbReference>
<dbReference type="HAMAP" id="MF_00002">
    <property type="entry name" value="Asp_carb_tr_reg"/>
    <property type="match status" value="1"/>
</dbReference>
<dbReference type="InterPro" id="IPR020545">
    <property type="entry name" value="Asp_carbamoyltransf_reg_N"/>
</dbReference>
<dbReference type="InterPro" id="IPR002801">
    <property type="entry name" value="Asp_carbamoylTrfase_reg"/>
</dbReference>
<dbReference type="InterPro" id="IPR020542">
    <property type="entry name" value="Asp_carbamoyltrfase_reg_C"/>
</dbReference>
<dbReference type="InterPro" id="IPR036792">
    <property type="entry name" value="Asp_carbatrfase_reg_C_sf"/>
</dbReference>
<dbReference type="InterPro" id="IPR036793">
    <property type="entry name" value="Asp_carbatrfase_reg_N_sf"/>
</dbReference>
<dbReference type="NCBIfam" id="TIGR00240">
    <property type="entry name" value="ATCase_reg"/>
    <property type="match status" value="1"/>
</dbReference>
<dbReference type="PANTHER" id="PTHR35805">
    <property type="entry name" value="ASPARTATE CARBAMOYLTRANSFERASE REGULATORY CHAIN"/>
    <property type="match status" value="1"/>
</dbReference>
<dbReference type="PANTHER" id="PTHR35805:SF1">
    <property type="entry name" value="ASPARTATE CARBAMOYLTRANSFERASE REGULATORY CHAIN"/>
    <property type="match status" value="1"/>
</dbReference>
<dbReference type="Pfam" id="PF01948">
    <property type="entry name" value="PyrI"/>
    <property type="match status" value="1"/>
</dbReference>
<dbReference type="Pfam" id="PF02748">
    <property type="entry name" value="PyrI_C"/>
    <property type="match status" value="1"/>
</dbReference>
<dbReference type="SUPFAM" id="SSF57825">
    <property type="entry name" value="Aspartate carbamoyltransferase, Regulatory-chain, C-terminal domain"/>
    <property type="match status" value="1"/>
</dbReference>
<dbReference type="SUPFAM" id="SSF54893">
    <property type="entry name" value="Aspartate carbamoyltransferase, Regulatory-chain, N-terminal domain"/>
    <property type="match status" value="1"/>
</dbReference>
<protein>
    <recommendedName>
        <fullName evidence="1">Aspartate carbamoyltransferase regulatory chain</fullName>
    </recommendedName>
</protein>
<organism>
    <name type="scientific">Escherichia coli (strain UTI89 / UPEC)</name>
    <dbReference type="NCBI Taxonomy" id="364106"/>
    <lineage>
        <taxon>Bacteria</taxon>
        <taxon>Pseudomonadati</taxon>
        <taxon>Pseudomonadota</taxon>
        <taxon>Gammaproteobacteria</taxon>
        <taxon>Enterobacterales</taxon>
        <taxon>Enterobacteriaceae</taxon>
        <taxon>Escherichia</taxon>
    </lineage>
</organism>
<feature type="chain" id="PRO_1000000034" description="Aspartate carbamoyltransferase regulatory chain">
    <location>
        <begin position="1"/>
        <end position="153"/>
    </location>
</feature>
<feature type="binding site" evidence="1">
    <location>
        <position position="109"/>
    </location>
    <ligand>
        <name>Zn(2+)</name>
        <dbReference type="ChEBI" id="CHEBI:29105"/>
    </ligand>
</feature>
<feature type="binding site" evidence="1">
    <location>
        <position position="114"/>
    </location>
    <ligand>
        <name>Zn(2+)</name>
        <dbReference type="ChEBI" id="CHEBI:29105"/>
    </ligand>
</feature>
<feature type="binding site" evidence="1">
    <location>
        <position position="138"/>
    </location>
    <ligand>
        <name>Zn(2+)</name>
        <dbReference type="ChEBI" id="CHEBI:29105"/>
    </ligand>
</feature>
<feature type="binding site" evidence="1">
    <location>
        <position position="141"/>
    </location>
    <ligand>
        <name>Zn(2+)</name>
        <dbReference type="ChEBI" id="CHEBI:29105"/>
    </ligand>
</feature>
<keyword id="KW-0479">Metal-binding</keyword>
<keyword id="KW-0665">Pyrimidine biosynthesis</keyword>
<keyword id="KW-0862">Zinc</keyword>
<comment type="function">
    <text evidence="1">Involved in allosteric regulation of aspartate carbamoyltransferase.</text>
</comment>
<comment type="cofactor">
    <cofactor evidence="1">
        <name>Zn(2+)</name>
        <dbReference type="ChEBI" id="CHEBI:29105"/>
    </cofactor>
    <text evidence="1">Binds 1 zinc ion per subunit.</text>
</comment>
<comment type="subunit">
    <text evidence="1">Contains catalytic and regulatory chains.</text>
</comment>
<comment type="similarity">
    <text evidence="1">Belongs to the PyrI family.</text>
</comment>
<reference key="1">
    <citation type="journal article" date="2006" name="Proc. Natl. Acad. Sci. U.S.A.">
        <title>Identification of genes subject to positive selection in uropathogenic strains of Escherichia coli: a comparative genomics approach.</title>
        <authorList>
            <person name="Chen S.L."/>
            <person name="Hung C.-S."/>
            <person name="Xu J."/>
            <person name="Reigstad C.S."/>
            <person name="Magrini V."/>
            <person name="Sabo A."/>
            <person name="Blasiar D."/>
            <person name="Bieri T."/>
            <person name="Meyer R.R."/>
            <person name="Ozersky P."/>
            <person name="Armstrong J.R."/>
            <person name="Fulton R.S."/>
            <person name="Latreille J.P."/>
            <person name="Spieth J."/>
            <person name="Hooton T.M."/>
            <person name="Mardis E.R."/>
            <person name="Hultgren S.J."/>
            <person name="Gordon J.I."/>
        </authorList>
    </citation>
    <scope>NUCLEOTIDE SEQUENCE [LARGE SCALE GENOMIC DNA]</scope>
    <source>
        <strain>UTI89 / UPEC</strain>
    </source>
</reference>
<gene>
    <name evidence="1" type="primary">pyrI</name>
    <name type="ordered locus">UTI89_C4850</name>
</gene>
<sequence length="153" mass="17121">MTHDNKLQVEAIKRGTVIDHIPAQIGFKLLSLFKLTETDQRITIGLNLPSGEMGRKDLIKIENTFLSEDQVDQLALYAPQATVNRIDNYEVVGKSRPSLPERIDNVLVCPNSNCISHAEPVSSSFAVRKRANDIALKCKYCEKEFSHNVVLAN</sequence>
<name>PYRI_ECOUT</name>
<accession>Q1R310</accession>